<sequence>MPSFDVVSELDWHEVTNAVDQANREITTRYDFKGVKAHYEIKDKKSVVMEAEAEPQLRQMSDILNQKLVGRGIDLKSLEKEDVVKGNMRASQAVKMKEGLETDEAKKIVKMIKDSKAKVQAQIQGDQLRVTGKKRDDLQQVMALLRGADLAQPVQFTNFRD</sequence>
<dbReference type="EMBL" id="CP000749">
    <property type="protein sequence ID" value="ABR70955.1"/>
    <property type="molecule type" value="Genomic_DNA"/>
</dbReference>
<dbReference type="SMR" id="A6VWX6"/>
<dbReference type="STRING" id="400668.Mmwyl1_2033"/>
<dbReference type="KEGG" id="mmw:Mmwyl1_2033"/>
<dbReference type="eggNOG" id="COG1666">
    <property type="taxonomic scope" value="Bacteria"/>
</dbReference>
<dbReference type="HOGENOM" id="CLU_099839_1_0_6"/>
<dbReference type="OrthoDB" id="9801447at2"/>
<dbReference type="GO" id="GO:0005829">
    <property type="term" value="C:cytosol"/>
    <property type="evidence" value="ECO:0007669"/>
    <property type="project" value="TreeGrafter"/>
</dbReference>
<dbReference type="GO" id="GO:0000166">
    <property type="term" value="F:nucleotide binding"/>
    <property type="evidence" value="ECO:0007669"/>
    <property type="project" value="TreeGrafter"/>
</dbReference>
<dbReference type="CDD" id="cd11740">
    <property type="entry name" value="YajQ_like"/>
    <property type="match status" value="1"/>
</dbReference>
<dbReference type="FunFam" id="3.30.70.860:FF:000001">
    <property type="entry name" value="UPF0234 protein YajQ"/>
    <property type="match status" value="1"/>
</dbReference>
<dbReference type="Gene3D" id="3.30.70.860">
    <property type="match status" value="1"/>
</dbReference>
<dbReference type="Gene3D" id="3.30.70.990">
    <property type="entry name" value="YajQ-like, domain 2"/>
    <property type="match status" value="1"/>
</dbReference>
<dbReference type="HAMAP" id="MF_00632">
    <property type="entry name" value="YajQ"/>
    <property type="match status" value="1"/>
</dbReference>
<dbReference type="InterPro" id="IPR007551">
    <property type="entry name" value="DUF520"/>
</dbReference>
<dbReference type="InterPro" id="IPR035571">
    <property type="entry name" value="UPF0234-like_C"/>
</dbReference>
<dbReference type="InterPro" id="IPR035570">
    <property type="entry name" value="UPF0234_N"/>
</dbReference>
<dbReference type="InterPro" id="IPR036183">
    <property type="entry name" value="YajQ-like_sf"/>
</dbReference>
<dbReference type="NCBIfam" id="NF003819">
    <property type="entry name" value="PRK05412.1"/>
    <property type="match status" value="1"/>
</dbReference>
<dbReference type="PANTHER" id="PTHR30476">
    <property type="entry name" value="UPF0234 PROTEIN YAJQ"/>
    <property type="match status" value="1"/>
</dbReference>
<dbReference type="PANTHER" id="PTHR30476:SF0">
    <property type="entry name" value="UPF0234 PROTEIN YAJQ"/>
    <property type="match status" value="1"/>
</dbReference>
<dbReference type="Pfam" id="PF04461">
    <property type="entry name" value="DUF520"/>
    <property type="match status" value="1"/>
</dbReference>
<dbReference type="SUPFAM" id="SSF89963">
    <property type="entry name" value="YajQ-like"/>
    <property type="match status" value="2"/>
</dbReference>
<keyword id="KW-0547">Nucleotide-binding</keyword>
<feature type="chain" id="PRO_1000082628" description="Nucleotide-binding protein Mmwyl1_2033">
    <location>
        <begin position="1"/>
        <end position="161"/>
    </location>
</feature>
<evidence type="ECO:0000255" key="1">
    <source>
        <dbReference type="HAMAP-Rule" id="MF_00632"/>
    </source>
</evidence>
<proteinExistence type="inferred from homology"/>
<accession>A6VWX6</accession>
<comment type="function">
    <text evidence="1">Nucleotide-binding protein.</text>
</comment>
<comment type="similarity">
    <text evidence="1">Belongs to the YajQ family.</text>
</comment>
<reference key="1">
    <citation type="submission" date="2007-06" db="EMBL/GenBank/DDBJ databases">
        <title>Complete sequence of Marinomonas sp. MWYL1.</title>
        <authorList>
            <consortium name="US DOE Joint Genome Institute"/>
            <person name="Copeland A."/>
            <person name="Lucas S."/>
            <person name="Lapidus A."/>
            <person name="Barry K."/>
            <person name="Glavina del Rio T."/>
            <person name="Dalin E."/>
            <person name="Tice H."/>
            <person name="Pitluck S."/>
            <person name="Kiss H."/>
            <person name="Brettin T."/>
            <person name="Bruce D."/>
            <person name="Detter J.C."/>
            <person name="Han C."/>
            <person name="Schmutz J."/>
            <person name="Larimer F."/>
            <person name="Land M."/>
            <person name="Hauser L."/>
            <person name="Kyrpides N."/>
            <person name="Kim E."/>
            <person name="Johnston A.W.B."/>
            <person name="Todd J.D."/>
            <person name="Rogers R."/>
            <person name="Wexler M."/>
            <person name="Bond P.L."/>
            <person name="Li Y."/>
            <person name="Richardson P."/>
        </authorList>
    </citation>
    <scope>NUCLEOTIDE SEQUENCE [LARGE SCALE GENOMIC DNA]</scope>
    <source>
        <strain>MWYL1</strain>
    </source>
</reference>
<name>Y2033_MARMS</name>
<organism>
    <name type="scientific">Marinomonas sp. (strain MWYL1)</name>
    <dbReference type="NCBI Taxonomy" id="400668"/>
    <lineage>
        <taxon>Bacteria</taxon>
        <taxon>Pseudomonadati</taxon>
        <taxon>Pseudomonadota</taxon>
        <taxon>Gammaproteobacteria</taxon>
        <taxon>Oceanospirillales</taxon>
        <taxon>Oceanospirillaceae</taxon>
        <taxon>Marinomonas</taxon>
    </lineage>
</organism>
<gene>
    <name type="ordered locus">Mmwyl1_2033</name>
</gene>
<protein>
    <recommendedName>
        <fullName evidence="1">Nucleotide-binding protein Mmwyl1_2033</fullName>
    </recommendedName>
</protein>